<dbReference type="EC" id="6.1.1.11" evidence="1"/>
<dbReference type="EMBL" id="AE001273">
    <property type="protein sequence ID" value="AAC68324.1"/>
    <property type="molecule type" value="Genomic_DNA"/>
</dbReference>
<dbReference type="PIR" id="D71479">
    <property type="entry name" value="D71479"/>
</dbReference>
<dbReference type="RefSeq" id="NP_220248.1">
    <property type="nucleotide sequence ID" value="NC_000117.1"/>
</dbReference>
<dbReference type="RefSeq" id="WP_009872106.1">
    <property type="nucleotide sequence ID" value="NC_000117.1"/>
</dbReference>
<dbReference type="SMR" id="O84734"/>
<dbReference type="FunCoup" id="O84734">
    <property type="interactions" value="267"/>
</dbReference>
<dbReference type="STRING" id="272561.CT_729"/>
<dbReference type="EnsemblBacteria" id="AAC68324">
    <property type="protein sequence ID" value="AAC68324"/>
    <property type="gene ID" value="CT_729"/>
</dbReference>
<dbReference type="GeneID" id="884519"/>
<dbReference type="KEGG" id="ctr:CT_729"/>
<dbReference type="PATRIC" id="fig|272561.5.peg.802"/>
<dbReference type="HOGENOM" id="CLU_023797_1_1_0"/>
<dbReference type="InParanoid" id="O84734"/>
<dbReference type="OrthoDB" id="9804647at2"/>
<dbReference type="UniPathway" id="UPA00906">
    <property type="reaction ID" value="UER00895"/>
</dbReference>
<dbReference type="Proteomes" id="UP000000431">
    <property type="component" value="Chromosome"/>
</dbReference>
<dbReference type="GO" id="GO:0005737">
    <property type="term" value="C:cytoplasm"/>
    <property type="evidence" value="ECO:0007669"/>
    <property type="project" value="UniProtKB-SubCell"/>
</dbReference>
<dbReference type="GO" id="GO:0005524">
    <property type="term" value="F:ATP binding"/>
    <property type="evidence" value="ECO:0007669"/>
    <property type="project" value="UniProtKB-UniRule"/>
</dbReference>
<dbReference type="GO" id="GO:0004828">
    <property type="term" value="F:serine-tRNA ligase activity"/>
    <property type="evidence" value="ECO:0007669"/>
    <property type="project" value="UniProtKB-UniRule"/>
</dbReference>
<dbReference type="GO" id="GO:0016260">
    <property type="term" value="P:selenocysteine biosynthetic process"/>
    <property type="evidence" value="ECO:0007669"/>
    <property type="project" value="UniProtKB-UniRule"/>
</dbReference>
<dbReference type="GO" id="GO:0006434">
    <property type="term" value="P:seryl-tRNA aminoacylation"/>
    <property type="evidence" value="ECO:0007669"/>
    <property type="project" value="UniProtKB-UniRule"/>
</dbReference>
<dbReference type="CDD" id="cd00770">
    <property type="entry name" value="SerRS_core"/>
    <property type="match status" value="1"/>
</dbReference>
<dbReference type="Gene3D" id="3.30.930.10">
    <property type="entry name" value="Bira Bifunctional Protein, Domain 2"/>
    <property type="match status" value="1"/>
</dbReference>
<dbReference type="Gene3D" id="1.10.287.40">
    <property type="entry name" value="Serine-tRNA synthetase, tRNA binding domain"/>
    <property type="match status" value="1"/>
</dbReference>
<dbReference type="HAMAP" id="MF_00176">
    <property type="entry name" value="Ser_tRNA_synth_type1"/>
    <property type="match status" value="1"/>
</dbReference>
<dbReference type="InterPro" id="IPR002314">
    <property type="entry name" value="aa-tRNA-synt_IIb"/>
</dbReference>
<dbReference type="InterPro" id="IPR006195">
    <property type="entry name" value="aa-tRNA-synth_II"/>
</dbReference>
<dbReference type="InterPro" id="IPR045864">
    <property type="entry name" value="aa-tRNA-synth_II/BPL/LPL"/>
</dbReference>
<dbReference type="InterPro" id="IPR002317">
    <property type="entry name" value="Ser-tRNA-ligase_type_1"/>
</dbReference>
<dbReference type="InterPro" id="IPR015866">
    <property type="entry name" value="Ser-tRNA-synth_1_N"/>
</dbReference>
<dbReference type="InterPro" id="IPR042103">
    <property type="entry name" value="SerRS_1_N_sf"/>
</dbReference>
<dbReference type="InterPro" id="IPR033729">
    <property type="entry name" value="SerRS_core"/>
</dbReference>
<dbReference type="InterPro" id="IPR010978">
    <property type="entry name" value="tRNA-bd_arm"/>
</dbReference>
<dbReference type="NCBIfam" id="TIGR00414">
    <property type="entry name" value="serS"/>
    <property type="match status" value="1"/>
</dbReference>
<dbReference type="PANTHER" id="PTHR43697:SF1">
    <property type="entry name" value="SERINE--TRNA LIGASE"/>
    <property type="match status" value="1"/>
</dbReference>
<dbReference type="PANTHER" id="PTHR43697">
    <property type="entry name" value="SERYL-TRNA SYNTHETASE"/>
    <property type="match status" value="1"/>
</dbReference>
<dbReference type="Pfam" id="PF02403">
    <property type="entry name" value="Seryl_tRNA_N"/>
    <property type="match status" value="1"/>
</dbReference>
<dbReference type="Pfam" id="PF00587">
    <property type="entry name" value="tRNA-synt_2b"/>
    <property type="match status" value="1"/>
</dbReference>
<dbReference type="PIRSF" id="PIRSF001529">
    <property type="entry name" value="Ser-tRNA-synth_IIa"/>
    <property type="match status" value="1"/>
</dbReference>
<dbReference type="PRINTS" id="PR00981">
    <property type="entry name" value="TRNASYNTHSER"/>
</dbReference>
<dbReference type="SUPFAM" id="SSF55681">
    <property type="entry name" value="Class II aaRS and biotin synthetases"/>
    <property type="match status" value="1"/>
</dbReference>
<dbReference type="SUPFAM" id="SSF46589">
    <property type="entry name" value="tRNA-binding arm"/>
    <property type="match status" value="1"/>
</dbReference>
<dbReference type="PROSITE" id="PS50862">
    <property type="entry name" value="AA_TRNA_LIGASE_II"/>
    <property type="match status" value="1"/>
</dbReference>
<feature type="chain" id="PRO_0000122032" description="Serine--tRNA ligase">
    <location>
        <begin position="1"/>
        <end position="428"/>
    </location>
</feature>
<feature type="binding site" evidence="1">
    <location>
        <begin position="231"/>
        <end position="233"/>
    </location>
    <ligand>
        <name>L-serine</name>
        <dbReference type="ChEBI" id="CHEBI:33384"/>
    </ligand>
</feature>
<feature type="binding site" evidence="1">
    <location>
        <begin position="262"/>
        <end position="264"/>
    </location>
    <ligand>
        <name>ATP</name>
        <dbReference type="ChEBI" id="CHEBI:30616"/>
    </ligand>
</feature>
<feature type="binding site" evidence="1">
    <location>
        <position position="278"/>
    </location>
    <ligand>
        <name>ATP</name>
        <dbReference type="ChEBI" id="CHEBI:30616"/>
    </ligand>
</feature>
<feature type="binding site" evidence="1">
    <location>
        <position position="285"/>
    </location>
    <ligand>
        <name>L-serine</name>
        <dbReference type="ChEBI" id="CHEBI:33384"/>
    </ligand>
</feature>
<feature type="binding site" evidence="1">
    <location>
        <begin position="349"/>
        <end position="352"/>
    </location>
    <ligand>
        <name>ATP</name>
        <dbReference type="ChEBI" id="CHEBI:30616"/>
    </ligand>
</feature>
<feature type="binding site" evidence="1">
    <location>
        <position position="384"/>
    </location>
    <ligand>
        <name>L-serine</name>
        <dbReference type="ChEBI" id="CHEBI:33384"/>
    </ligand>
</feature>
<evidence type="ECO:0000255" key="1">
    <source>
        <dbReference type="HAMAP-Rule" id="MF_00176"/>
    </source>
</evidence>
<protein>
    <recommendedName>
        <fullName evidence="1">Serine--tRNA ligase</fullName>
        <ecNumber evidence="1">6.1.1.11</ecNumber>
    </recommendedName>
    <alternativeName>
        <fullName evidence="1">Seryl-tRNA synthetase</fullName>
        <shortName evidence="1">SerRS</shortName>
    </alternativeName>
    <alternativeName>
        <fullName evidence="1">Seryl-tRNA(Ser/Sec) synthetase</fullName>
    </alternativeName>
</protein>
<name>SYS_CHLTR</name>
<reference key="1">
    <citation type="journal article" date="1998" name="Science">
        <title>Genome sequence of an obligate intracellular pathogen of humans: Chlamydia trachomatis.</title>
        <authorList>
            <person name="Stephens R.S."/>
            <person name="Kalman S."/>
            <person name="Lammel C.J."/>
            <person name="Fan J."/>
            <person name="Marathe R."/>
            <person name="Aravind L."/>
            <person name="Mitchell W.P."/>
            <person name="Olinger L."/>
            <person name="Tatusov R.L."/>
            <person name="Zhao Q."/>
            <person name="Koonin E.V."/>
            <person name="Davis R.W."/>
        </authorList>
    </citation>
    <scope>NUCLEOTIDE SEQUENCE [LARGE SCALE GENOMIC DNA]</scope>
    <source>
        <strain>ATCC VR-885 / DSM 19411 / UW-3/Cx</strain>
    </source>
</reference>
<comment type="function">
    <text evidence="1">Catalyzes the attachment of serine to tRNA(Ser). Is also able to aminoacylate tRNA(Sec) with serine, to form the misacylated tRNA L-seryl-tRNA(Sec), which will be further converted into selenocysteinyl-tRNA(Sec).</text>
</comment>
<comment type="catalytic activity">
    <reaction evidence="1">
        <text>tRNA(Ser) + L-serine + ATP = L-seryl-tRNA(Ser) + AMP + diphosphate + H(+)</text>
        <dbReference type="Rhea" id="RHEA:12292"/>
        <dbReference type="Rhea" id="RHEA-COMP:9669"/>
        <dbReference type="Rhea" id="RHEA-COMP:9703"/>
        <dbReference type="ChEBI" id="CHEBI:15378"/>
        <dbReference type="ChEBI" id="CHEBI:30616"/>
        <dbReference type="ChEBI" id="CHEBI:33019"/>
        <dbReference type="ChEBI" id="CHEBI:33384"/>
        <dbReference type="ChEBI" id="CHEBI:78442"/>
        <dbReference type="ChEBI" id="CHEBI:78533"/>
        <dbReference type="ChEBI" id="CHEBI:456215"/>
        <dbReference type="EC" id="6.1.1.11"/>
    </reaction>
</comment>
<comment type="catalytic activity">
    <reaction evidence="1">
        <text>tRNA(Sec) + L-serine + ATP = L-seryl-tRNA(Sec) + AMP + diphosphate + H(+)</text>
        <dbReference type="Rhea" id="RHEA:42580"/>
        <dbReference type="Rhea" id="RHEA-COMP:9742"/>
        <dbReference type="Rhea" id="RHEA-COMP:10128"/>
        <dbReference type="ChEBI" id="CHEBI:15378"/>
        <dbReference type="ChEBI" id="CHEBI:30616"/>
        <dbReference type="ChEBI" id="CHEBI:33019"/>
        <dbReference type="ChEBI" id="CHEBI:33384"/>
        <dbReference type="ChEBI" id="CHEBI:78442"/>
        <dbReference type="ChEBI" id="CHEBI:78533"/>
        <dbReference type="ChEBI" id="CHEBI:456215"/>
        <dbReference type="EC" id="6.1.1.11"/>
    </reaction>
</comment>
<comment type="pathway">
    <text evidence="1">Aminoacyl-tRNA biosynthesis; selenocysteinyl-tRNA(Sec) biosynthesis; L-seryl-tRNA(Sec) from L-serine and tRNA(Sec): step 1/1.</text>
</comment>
<comment type="subunit">
    <text evidence="1">Homodimer. The tRNA molecule binds across the dimer.</text>
</comment>
<comment type="subcellular location">
    <subcellularLocation>
        <location evidence="1">Cytoplasm</location>
    </subcellularLocation>
</comment>
<comment type="domain">
    <text evidence="1">Consists of two distinct domains, a catalytic core and a N-terminal extension that is involved in tRNA binding.</text>
</comment>
<comment type="similarity">
    <text evidence="1">Belongs to the class-II aminoacyl-tRNA synthetase family. Type-1 seryl-tRNA synthetase subfamily.</text>
</comment>
<proteinExistence type="inferred from homology"/>
<sequence>MLDIRLIRKEPKECESRLQKKDPAISLERLLDLDKTVRQLKADSEALLAKRKVLSGQIHKAKVANENADALIQEVNTIADQLVAFETTLQEQEALLEDLMARLPNYPDEDVPVSPDKTGNQVIKGHGEVPTFPFPPKHHMQLNEALQILDFKLPAKTTGSGWPAYCNEGVLLEWALLTYLLNKQQAHGFQLWLPPLLVKRDILFGSGQIPKFDGQYYRVEDGDQSLFLIPTAEVVLNGFHSQEILNEQDLPLCYAAFTPCFRREAGAGGAHERGLVRVHQFHKVEMFAFTTPEQEEVVYQKMLHVVEEILSELQLPYQLSLLSTGDMSFTAKKTIDAEVWLPGQKAFYEVSSISKCGDFQARRSETRYRDAQGKLHFVNTLNGSGLATPRLLVAILENYQQADGSVVIPSVLRPYMNNQEILLPKTVR</sequence>
<accession>O84734</accession>
<keyword id="KW-0030">Aminoacyl-tRNA synthetase</keyword>
<keyword id="KW-0067">ATP-binding</keyword>
<keyword id="KW-0963">Cytoplasm</keyword>
<keyword id="KW-0436">Ligase</keyword>
<keyword id="KW-0547">Nucleotide-binding</keyword>
<keyword id="KW-0648">Protein biosynthesis</keyword>
<keyword id="KW-1185">Reference proteome</keyword>
<gene>
    <name evidence="1" type="primary">serS</name>
    <name type="ordered locus">CT_729</name>
</gene>
<organism>
    <name type="scientific">Chlamydia trachomatis serovar D (strain ATCC VR-885 / DSM 19411 / UW-3/Cx)</name>
    <dbReference type="NCBI Taxonomy" id="272561"/>
    <lineage>
        <taxon>Bacteria</taxon>
        <taxon>Pseudomonadati</taxon>
        <taxon>Chlamydiota</taxon>
        <taxon>Chlamydiia</taxon>
        <taxon>Chlamydiales</taxon>
        <taxon>Chlamydiaceae</taxon>
        <taxon>Chlamydia/Chlamydophila group</taxon>
        <taxon>Chlamydia</taxon>
    </lineage>
</organism>